<keyword id="KW-0002">3D-structure</keyword>
<keyword id="KW-0325">Glycoprotein</keyword>
<keyword id="KW-0430">Lectin</keyword>
<feature type="chain" id="PRO_0000105123" description="Basic agglutinin">
    <location>
        <begin position="1"/>
        <end position="242"/>
    </location>
</feature>
<feature type="glycosylation site" description="N-linked (GlcNAc...) asparagine">
    <location>
        <position position="45"/>
    </location>
</feature>
<feature type="glycosylation site" description="N-linked (GlcNAc...) asparagine">
    <location>
        <position position="220"/>
    </location>
</feature>
<feature type="strand" evidence="2">
    <location>
        <begin position="3"/>
        <end position="10"/>
    </location>
</feature>
<feature type="strand" evidence="2">
    <location>
        <begin position="18"/>
        <end position="22"/>
    </location>
</feature>
<feature type="strand" evidence="2">
    <location>
        <begin position="32"/>
        <end position="35"/>
    </location>
</feature>
<feature type="strand" evidence="2">
    <location>
        <begin position="47"/>
        <end position="54"/>
    </location>
</feature>
<feature type="turn" evidence="2">
    <location>
        <begin position="61"/>
        <end position="63"/>
    </location>
</feature>
<feature type="strand" evidence="2">
    <location>
        <begin position="68"/>
        <end position="76"/>
    </location>
</feature>
<feature type="strand" evidence="2">
    <location>
        <begin position="88"/>
        <end position="95"/>
    </location>
</feature>
<feature type="helix" evidence="2">
    <location>
        <begin position="105"/>
        <end position="107"/>
    </location>
</feature>
<feature type="turn" evidence="2">
    <location>
        <begin position="108"/>
        <end position="110"/>
    </location>
</feature>
<feature type="strand" evidence="3">
    <location>
        <begin position="113"/>
        <end position="115"/>
    </location>
</feature>
<feature type="strand" evidence="2">
    <location>
        <begin position="120"/>
        <end position="125"/>
    </location>
</feature>
<feature type="strand" evidence="2">
    <location>
        <begin position="134"/>
        <end position="146"/>
    </location>
</feature>
<feature type="strand" evidence="2">
    <location>
        <begin position="148"/>
        <end position="152"/>
    </location>
</feature>
<feature type="strand" evidence="2">
    <location>
        <begin position="161"/>
        <end position="168"/>
    </location>
</feature>
<feature type="turn" evidence="2">
    <location>
        <begin position="169"/>
        <end position="172"/>
    </location>
</feature>
<feature type="strand" evidence="2">
    <location>
        <begin position="173"/>
        <end position="180"/>
    </location>
</feature>
<feature type="turn" evidence="2">
    <location>
        <begin position="181"/>
        <end position="184"/>
    </location>
</feature>
<feature type="strand" evidence="2">
    <location>
        <begin position="185"/>
        <end position="192"/>
    </location>
</feature>
<feature type="helix" evidence="2">
    <location>
        <begin position="195"/>
        <end position="198"/>
    </location>
</feature>
<feature type="strand" evidence="2">
    <location>
        <begin position="201"/>
        <end position="211"/>
    </location>
</feature>
<feature type="helix" evidence="2">
    <location>
        <begin position="214"/>
        <end position="216"/>
    </location>
</feature>
<feature type="strand" evidence="2">
    <location>
        <begin position="226"/>
        <end position="235"/>
    </location>
</feature>
<accession>O24313</accession>
<reference key="1">
    <citation type="journal article" date="1996" name="FEBS Lett.">
        <title>Cloning and sequencing of winged bean (Psophocarpus tetragonolobus) basic agglutinin (WBA I): presence of second glycosylation site and its implications in quaternary structure.</title>
        <authorList>
            <person name="Sharma V."/>
            <person name="Srinivas V.R."/>
            <person name="Surolia A."/>
        </authorList>
    </citation>
    <scope>NUCLEOTIDE SEQUENCE [GENOMIC DNA]</scope>
</reference>
<reference key="2">
    <citation type="journal article" date="1998" name="J. Mol. Biol.">
        <title>Carbohydrate specificity and quaternary association in basic winged bean lectin: X-ray analysis of the lectin at 2.5-A resolution.</title>
        <authorList>
            <person name="Prabu M.M."/>
            <person name="Sankaranarayanan R."/>
            <person name="Puri K.D."/>
            <person name="Sharma V."/>
            <person name="Surolia A."/>
            <person name="Vijayan M."/>
            <person name="Suguna K."/>
        </authorList>
    </citation>
    <scope>X-RAY CRYSTALLOGRAPHY (2.5 ANGSTROMS)</scope>
</reference>
<gene>
    <name type="primary">WBAI</name>
</gene>
<protein>
    <recommendedName>
        <fullName>Basic agglutinin</fullName>
    </recommendedName>
    <alternativeName>
        <fullName>WBA I</fullName>
    </alternativeName>
</protein>
<evidence type="ECO:0000305" key="1"/>
<evidence type="ECO:0007829" key="2">
    <source>
        <dbReference type="PDB" id="1WBF"/>
    </source>
</evidence>
<evidence type="ECO:0007829" key="3">
    <source>
        <dbReference type="PDB" id="2ZMK"/>
    </source>
</evidence>
<name>LEC1_PSOTE</name>
<proteinExistence type="evidence at protein level"/>
<dbReference type="EMBL" id="U60765">
    <property type="protein sequence ID" value="AAC49422.1"/>
    <property type="molecule type" value="Genomic_DNA"/>
</dbReference>
<dbReference type="PIR" id="S70467">
    <property type="entry name" value="S70467"/>
</dbReference>
<dbReference type="PDB" id="1WBF">
    <property type="method" value="X-ray"/>
    <property type="resolution" value="2.30 A"/>
    <property type="chains" value="A/B=1-242"/>
</dbReference>
<dbReference type="PDB" id="1WBL">
    <property type="method" value="X-ray"/>
    <property type="resolution" value="2.50 A"/>
    <property type="chains" value="A/B/C/D=2-242"/>
</dbReference>
<dbReference type="PDB" id="2D3S">
    <property type="method" value="X-ray"/>
    <property type="resolution" value="2.35 A"/>
    <property type="chains" value="A/B/C/D=1-242"/>
</dbReference>
<dbReference type="PDB" id="2DTW">
    <property type="method" value="X-ray"/>
    <property type="resolution" value="2.40 A"/>
    <property type="chains" value="A/B/C/D=2-242"/>
</dbReference>
<dbReference type="PDB" id="2DTY">
    <property type="method" value="X-ray"/>
    <property type="resolution" value="2.65 A"/>
    <property type="chains" value="A/B/C/D=2-242"/>
</dbReference>
<dbReference type="PDB" id="2DU0">
    <property type="method" value="X-ray"/>
    <property type="resolution" value="2.70 A"/>
    <property type="chains" value="A/B/C/D=2-242"/>
</dbReference>
<dbReference type="PDB" id="2DU1">
    <property type="method" value="X-ray"/>
    <property type="resolution" value="2.60 A"/>
    <property type="chains" value="A/B/C/D=2-242"/>
</dbReference>
<dbReference type="PDB" id="2E51">
    <property type="method" value="X-ray"/>
    <property type="resolution" value="2.50 A"/>
    <property type="chains" value="A/B/C/D=2-242"/>
</dbReference>
<dbReference type="PDB" id="2E53">
    <property type="method" value="X-ray"/>
    <property type="resolution" value="2.40 A"/>
    <property type="chains" value="A/B/C/D=2-242"/>
</dbReference>
<dbReference type="PDB" id="2E7Q">
    <property type="method" value="X-ray"/>
    <property type="resolution" value="2.75 A"/>
    <property type="chains" value="A/B/C/D=2-238"/>
</dbReference>
<dbReference type="PDB" id="2E7T">
    <property type="method" value="X-ray"/>
    <property type="resolution" value="2.65 A"/>
    <property type="chains" value="A/B/C/D=2-238"/>
</dbReference>
<dbReference type="PDB" id="2ZMK">
    <property type="method" value="X-ray"/>
    <property type="resolution" value="2.50 A"/>
    <property type="chains" value="A/B/C/D=2-242"/>
</dbReference>
<dbReference type="PDB" id="2ZML">
    <property type="method" value="X-ray"/>
    <property type="resolution" value="2.65 A"/>
    <property type="chains" value="A/B/C/D=2-242"/>
</dbReference>
<dbReference type="PDB" id="2ZMN">
    <property type="method" value="X-ray"/>
    <property type="resolution" value="2.90 A"/>
    <property type="chains" value="A/B/C/D=2-242"/>
</dbReference>
<dbReference type="PDBsum" id="1WBF"/>
<dbReference type="PDBsum" id="1WBL"/>
<dbReference type="PDBsum" id="2D3S"/>
<dbReference type="PDBsum" id="2DTW"/>
<dbReference type="PDBsum" id="2DTY"/>
<dbReference type="PDBsum" id="2DU0"/>
<dbReference type="PDBsum" id="2DU1"/>
<dbReference type="PDBsum" id="2E51"/>
<dbReference type="PDBsum" id="2E53"/>
<dbReference type="PDBsum" id="2E7Q"/>
<dbReference type="PDBsum" id="2E7T"/>
<dbReference type="PDBsum" id="2ZMK"/>
<dbReference type="PDBsum" id="2ZML"/>
<dbReference type="PDBsum" id="2ZMN"/>
<dbReference type="SMR" id="O24313"/>
<dbReference type="UniLectin" id="O24313"/>
<dbReference type="GlyCosmos" id="O24313">
    <property type="glycosylation" value="2 sites, No reported glycans"/>
</dbReference>
<dbReference type="EvolutionaryTrace" id="O24313"/>
<dbReference type="GO" id="GO:0030246">
    <property type="term" value="F:carbohydrate binding"/>
    <property type="evidence" value="ECO:0007669"/>
    <property type="project" value="UniProtKB-KW"/>
</dbReference>
<dbReference type="CDD" id="cd06899">
    <property type="entry name" value="lectin_legume_LecRK_Arcelin_ConA"/>
    <property type="match status" value="1"/>
</dbReference>
<dbReference type="Gene3D" id="2.60.120.200">
    <property type="match status" value="1"/>
</dbReference>
<dbReference type="InterPro" id="IPR013320">
    <property type="entry name" value="ConA-like_dom_sf"/>
</dbReference>
<dbReference type="InterPro" id="IPR016363">
    <property type="entry name" value="L-lectin"/>
</dbReference>
<dbReference type="InterPro" id="IPR019825">
    <property type="entry name" value="Lectin_legB_Mn/Ca_BS"/>
</dbReference>
<dbReference type="InterPro" id="IPR001220">
    <property type="entry name" value="Legume_lectin_dom"/>
</dbReference>
<dbReference type="InterPro" id="IPR050258">
    <property type="entry name" value="Leguminous_Lectin"/>
</dbReference>
<dbReference type="PANTHER" id="PTHR32401">
    <property type="entry name" value="CONCANAVALIN A-LIKE LECTIN FAMILY PROTEIN"/>
    <property type="match status" value="1"/>
</dbReference>
<dbReference type="PANTHER" id="PTHR32401:SF45">
    <property type="entry name" value="LECTIN"/>
    <property type="match status" value="1"/>
</dbReference>
<dbReference type="Pfam" id="PF00139">
    <property type="entry name" value="Lectin_legB"/>
    <property type="match status" value="1"/>
</dbReference>
<dbReference type="PIRSF" id="PIRSF002690">
    <property type="entry name" value="L-type_lectin_plant"/>
    <property type="match status" value="1"/>
</dbReference>
<dbReference type="SUPFAM" id="SSF49899">
    <property type="entry name" value="Concanavalin A-like lectins/glucanases"/>
    <property type="match status" value="1"/>
</dbReference>
<dbReference type="PROSITE" id="PS00307">
    <property type="entry name" value="LECTIN_LEGUME_BETA"/>
    <property type="match status" value="1"/>
</dbReference>
<organism>
    <name type="scientific">Psophocarpus tetragonolobus</name>
    <name type="common">Winged bean</name>
    <name type="synonym">Dolichos tetragonolobus</name>
    <dbReference type="NCBI Taxonomy" id="3891"/>
    <lineage>
        <taxon>Eukaryota</taxon>
        <taxon>Viridiplantae</taxon>
        <taxon>Streptophyta</taxon>
        <taxon>Embryophyta</taxon>
        <taxon>Tracheophyta</taxon>
        <taxon>Spermatophyta</taxon>
        <taxon>Magnoliopsida</taxon>
        <taxon>eudicotyledons</taxon>
        <taxon>Gunneridae</taxon>
        <taxon>Pentapetalae</taxon>
        <taxon>rosids</taxon>
        <taxon>fabids</taxon>
        <taxon>Fabales</taxon>
        <taxon>Fabaceae</taxon>
        <taxon>Papilionoideae</taxon>
        <taxon>50 kb inversion clade</taxon>
        <taxon>NPAAA clade</taxon>
        <taxon>indigoferoid/millettioid clade</taxon>
        <taxon>Phaseoleae</taxon>
        <taxon>Psophocarpus</taxon>
    </lineage>
</organism>
<sequence>MKTISFNFNQFHQNEEQLKLQRDARISSNSVLELTKVVNGVPTWNSTGRALYAKPVQVWDSTTGNVASFETRFSFSIRQPFPRPHPADGLVFFIAPPNTQTGEGGGYFGIYNPLSPYPFVAVEFDTFRNTWDPQIPHIGIDVNSVISTKTVPFTLDNGGIANVVIKYDASTKILHVVLVFPSLGTIYTIADIVDLKQVLPESVNVGFSAATGDPSGKQRNATETHDILSWSFSASLPGTNEF</sequence>
<comment type="function">
    <text>Lectin.</text>
</comment>
<comment type="similarity">
    <text evidence="1">Belongs to the leguminous lectin family.</text>
</comment>